<evidence type="ECO:0000250" key="1"/>
<evidence type="ECO:0000255" key="2"/>
<evidence type="ECO:0000305" key="3"/>
<comment type="function">
    <text evidence="1">The elongation of primed DNA templates by DNA polymerase delta and epsilon requires the action of the accessory proteins proliferating cell nuclear antigen (PCNA) and activator 1. Subunit 3 binds ATP (By similarity).</text>
</comment>
<comment type="subunit">
    <text evidence="1">Heteropentamer of subunits RFC1, RFC2, RFC3, RFC4 and RFC5 that forms a complex with PCNA in the presence of ATP.</text>
</comment>
<comment type="subcellular location">
    <subcellularLocation>
        <location evidence="1">Nucleus</location>
    </subcellularLocation>
</comment>
<comment type="similarity">
    <text evidence="3">Belongs to the activator 1 small subunits family.</text>
</comment>
<gene>
    <name type="primary">RFC3</name>
</gene>
<protein>
    <recommendedName>
        <fullName>Replication factor C subunit 3</fullName>
        <shortName>Replication factor C3</shortName>
    </recommendedName>
    <alternativeName>
        <fullName>Activator 1 subunit 3</fullName>
    </alternativeName>
</protein>
<sequence length="338" mass="37640">MDKGKKVETVEKQENSLPWVEKYRPTTLDEVAGHEGVITTIKKFVEEGKLPHLLFHGPPGTGKTTTIIAVARQIYGKNYRNMILELNASDERGIDVVRDQIKTFASTRQIFSSGFKLVILDEADAMTNAAQNALRRIIEKYSAHTRFCILANYTHKLNPALLSRCTRFRFSPLKEDAIKHRLAHVIEQESVDLSPEAFQSLLHLSSGDMRRALNVLQACYASVDAGEQISEELVYDCVGSPRPADIRTVLQAVLDGSWESALHTFSYIKQSKGLALADMLTAFAVEFQKLDLQNKTRIALLDGLSEIEWRLSSGGNESIQTSATIGVIKQSMELEASS</sequence>
<name>RFC3_BLAAD</name>
<keyword id="KW-0067">ATP-binding</keyword>
<keyword id="KW-0227">DNA damage</keyword>
<keyword id="KW-0235">DNA replication</keyword>
<keyword id="KW-0547">Nucleotide-binding</keyword>
<keyword id="KW-0539">Nucleus</keyword>
<dbReference type="EMBL" id="AJ007712">
    <property type="protein sequence ID" value="CAA07618.1"/>
    <property type="molecule type" value="Genomic_DNA"/>
</dbReference>
<dbReference type="SMR" id="O74111"/>
<dbReference type="PhylomeDB" id="O74111"/>
<dbReference type="GO" id="GO:0031390">
    <property type="term" value="C:Ctf18 RFC-like complex"/>
    <property type="evidence" value="ECO:0007669"/>
    <property type="project" value="TreeGrafter"/>
</dbReference>
<dbReference type="GO" id="GO:0005663">
    <property type="term" value="C:DNA replication factor C complex"/>
    <property type="evidence" value="ECO:0007669"/>
    <property type="project" value="TreeGrafter"/>
</dbReference>
<dbReference type="GO" id="GO:0031391">
    <property type="term" value="C:Elg1 RFC-like complex"/>
    <property type="evidence" value="ECO:0007669"/>
    <property type="project" value="TreeGrafter"/>
</dbReference>
<dbReference type="GO" id="GO:0031389">
    <property type="term" value="C:Rad17 RFC-like complex"/>
    <property type="evidence" value="ECO:0007669"/>
    <property type="project" value="TreeGrafter"/>
</dbReference>
<dbReference type="GO" id="GO:0005524">
    <property type="term" value="F:ATP binding"/>
    <property type="evidence" value="ECO:0007669"/>
    <property type="project" value="UniProtKB-KW"/>
</dbReference>
<dbReference type="GO" id="GO:0016887">
    <property type="term" value="F:ATP hydrolysis activity"/>
    <property type="evidence" value="ECO:0007669"/>
    <property type="project" value="InterPro"/>
</dbReference>
<dbReference type="GO" id="GO:0003677">
    <property type="term" value="F:DNA binding"/>
    <property type="evidence" value="ECO:0007669"/>
    <property type="project" value="InterPro"/>
</dbReference>
<dbReference type="GO" id="GO:0003689">
    <property type="term" value="F:DNA clamp loader activity"/>
    <property type="evidence" value="ECO:0007669"/>
    <property type="project" value="TreeGrafter"/>
</dbReference>
<dbReference type="GO" id="GO:0006281">
    <property type="term" value="P:DNA repair"/>
    <property type="evidence" value="ECO:0007669"/>
    <property type="project" value="TreeGrafter"/>
</dbReference>
<dbReference type="GO" id="GO:0006271">
    <property type="term" value="P:DNA strand elongation involved in DNA replication"/>
    <property type="evidence" value="ECO:0007669"/>
    <property type="project" value="UniProtKB-ARBA"/>
</dbReference>
<dbReference type="CDD" id="cd00009">
    <property type="entry name" value="AAA"/>
    <property type="match status" value="1"/>
</dbReference>
<dbReference type="CDD" id="cd18140">
    <property type="entry name" value="HLD_clamp_RFC"/>
    <property type="match status" value="1"/>
</dbReference>
<dbReference type="FunFam" id="1.10.8.60:FF:000028">
    <property type="entry name" value="Replication factor C subunit 5"/>
    <property type="match status" value="1"/>
</dbReference>
<dbReference type="FunFam" id="1.20.272.10:FF:000004">
    <property type="entry name" value="Replication factor C subunit 5"/>
    <property type="match status" value="1"/>
</dbReference>
<dbReference type="FunFam" id="3.40.50.300:FF:000129">
    <property type="entry name" value="Replication factor C subunit 5"/>
    <property type="match status" value="1"/>
</dbReference>
<dbReference type="Gene3D" id="1.10.8.60">
    <property type="match status" value="1"/>
</dbReference>
<dbReference type="Gene3D" id="1.20.272.10">
    <property type="match status" value="1"/>
</dbReference>
<dbReference type="Gene3D" id="3.40.50.300">
    <property type="entry name" value="P-loop containing nucleotide triphosphate hydrolases"/>
    <property type="match status" value="1"/>
</dbReference>
<dbReference type="InterPro" id="IPR003593">
    <property type="entry name" value="AAA+_ATPase"/>
</dbReference>
<dbReference type="InterPro" id="IPR003959">
    <property type="entry name" value="ATPase_AAA_core"/>
</dbReference>
<dbReference type="InterPro" id="IPR008921">
    <property type="entry name" value="DNA_pol3_clamp-load_cplx_C"/>
</dbReference>
<dbReference type="InterPro" id="IPR050238">
    <property type="entry name" value="DNA_Rep/Repair_Clamp_Loader"/>
</dbReference>
<dbReference type="InterPro" id="IPR027417">
    <property type="entry name" value="P-loop_NTPase"/>
</dbReference>
<dbReference type="InterPro" id="IPR013748">
    <property type="entry name" value="Rep_factorC_C"/>
</dbReference>
<dbReference type="InterPro" id="IPR047854">
    <property type="entry name" value="RFC_lid"/>
</dbReference>
<dbReference type="NCBIfam" id="NF001679">
    <property type="entry name" value="PRK00440.1"/>
    <property type="match status" value="1"/>
</dbReference>
<dbReference type="PANTHER" id="PTHR11669">
    <property type="entry name" value="REPLICATION FACTOR C / DNA POLYMERASE III GAMMA-TAU SUBUNIT"/>
    <property type="match status" value="1"/>
</dbReference>
<dbReference type="PANTHER" id="PTHR11669:SF9">
    <property type="entry name" value="REPLICATION FACTOR C SUBUNIT 5"/>
    <property type="match status" value="1"/>
</dbReference>
<dbReference type="Pfam" id="PF00004">
    <property type="entry name" value="AAA"/>
    <property type="match status" value="1"/>
</dbReference>
<dbReference type="Pfam" id="PF08542">
    <property type="entry name" value="Rep_fac_C"/>
    <property type="match status" value="1"/>
</dbReference>
<dbReference type="SMART" id="SM00382">
    <property type="entry name" value="AAA"/>
    <property type="match status" value="1"/>
</dbReference>
<dbReference type="SUPFAM" id="SSF52540">
    <property type="entry name" value="P-loop containing nucleoside triphosphate hydrolases"/>
    <property type="match status" value="1"/>
</dbReference>
<dbReference type="SUPFAM" id="SSF48019">
    <property type="entry name" value="post-AAA+ oligomerization domain-like"/>
    <property type="match status" value="1"/>
</dbReference>
<organism>
    <name type="scientific">Blastobotrys adeninivorans</name>
    <name type="common">Yeast</name>
    <name type="synonym">Arxula adeninivorans</name>
    <dbReference type="NCBI Taxonomy" id="409370"/>
    <lineage>
        <taxon>Eukaryota</taxon>
        <taxon>Fungi</taxon>
        <taxon>Dikarya</taxon>
        <taxon>Ascomycota</taxon>
        <taxon>Saccharomycotina</taxon>
        <taxon>Dipodascomycetes</taxon>
        <taxon>Dipodascales</taxon>
        <taxon>Trichomonascaceae</taxon>
        <taxon>Blastobotrys</taxon>
    </lineage>
</organism>
<feature type="chain" id="PRO_0000121754" description="Replication factor C subunit 3">
    <location>
        <begin position="1"/>
        <end position="338"/>
    </location>
</feature>
<feature type="binding site" evidence="2">
    <location>
        <begin position="57"/>
        <end position="64"/>
    </location>
    <ligand>
        <name>ATP</name>
        <dbReference type="ChEBI" id="CHEBI:30616"/>
    </ligand>
</feature>
<accession>O74111</accession>
<proteinExistence type="inferred from homology"/>
<reference key="1">
    <citation type="journal article" date="1999" name="Curr. Genet.">
        <title>Molecular cloning and expression of the ARFC3 gene a component of the replication factor C from the salt tolerant, dimorphic yeast Arxula adeninivorans LS3.</title>
        <authorList>
            <person name="Stoltenburg R."/>
            <person name="Loesche O."/>
            <person name="Klappbach G."/>
            <person name="Kunze G."/>
        </authorList>
    </citation>
    <scope>NUCLEOTIDE SEQUENCE [GENOMIC DNA]</scope>
    <source>
        <strain>LS3</strain>
    </source>
</reference>